<reference key="1">
    <citation type="journal article" date="2009" name="PLoS ONE">
        <title>Genome analysis of the anaerobic thermohalophilic bacterium Halothermothrix orenii.</title>
        <authorList>
            <person name="Mavromatis K."/>
            <person name="Ivanova N."/>
            <person name="Anderson I."/>
            <person name="Lykidis A."/>
            <person name="Hooper S.D."/>
            <person name="Sun H."/>
            <person name="Kunin V."/>
            <person name="Lapidus A."/>
            <person name="Hugenholtz P."/>
            <person name="Patel B."/>
            <person name="Kyrpides N.C."/>
        </authorList>
    </citation>
    <scope>NUCLEOTIDE SEQUENCE [LARGE SCALE GENOMIC DNA]</scope>
    <source>
        <strain>H 168 / OCM 544 / DSM 9562</strain>
    </source>
</reference>
<evidence type="ECO:0000255" key="1">
    <source>
        <dbReference type="HAMAP-Rule" id="MF_00255"/>
    </source>
</evidence>
<proteinExistence type="inferred from homology"/>
<organism>
    <name type="scientific">Halothermothrix orenii (strain H 168 / OCM 544 / DSM 9562)</name>
    <dbReference type="NCBI Taxonomy" id="373903"/>
    <lineage>
        <taxon>Bacteria</taxon>
        <taxon>Bacillati</taxon>
        <taxon>Bacillota</taxon>
        <taxon>Clostridia</taxon>
        <taxon>Halanaerobiales</taxon>
        <taxon>Halothermotrichaceae</taxon>
        <taxon>Halothermothrix</taxon>
    </lineage>
</organism>
<protein>
    <recommendedName>
        <fullName evidence="1">Glycine--tRNA ligase beta subunit</fullName>
        <ecNumber evidence="1">6.1.1.14</ecNumber>
    </recommendedName>
    <alternativeName>
        <fullName evidence="1">Glycyl-tRNA synthetase beta subunit</fullName>
        <shortName evidence="1">GlyRS</shortName>
    </alternativeName>
</protein>
<accession>B8CXH5</accession>
<name>SYGB_HALOH</name>
<keyword id="KW-0030">Aminoacyl-tRNA synthetase</keyword>
<keyword id="KW-0067">ATP-binding</keyword>
<keyword id="KW-0963">Cytoplasm</keyword>
<keyword id="KW-0436">Ligase</keyword>
<keyword id="KW-0547">Nucleotide-binding</keyword>
<keyword id="KW-0648">Protein biosynthesis</keyword>
<keyword id="KW-1185">Reference proteome</keyword>
<gene>
    <name evidence="1" type="primary">glyS</name>
    <name type="ordered locus">Hore_12440</name>
</gene>
<dbReference type="EC" id="6.1.1.14" evidence="1"/>
<dbReference type="EMBL" id="CP001098">
    <property type="protein sequence ID" value="ACL69994.1"/>
    <property type="molecule type" value="Genomic_DNA"/>
</dbReference>
<dbReference type="RefSeq" id="WP_012636178.1">
    <property type="nucleotide sequence ID" value="NC_011899.1"/>
</dbReference>
<dbReference type="SMR" id="B8CXH5"/>
<dbReference type="STRING" id="373903.Hore_12440"/>
<dbReference type="KEGG" id="hor:Hore_12440"/>
<dbReference type="eggNOG" id="COG0751">
    <property type="taxonomic scope" value="Bacteria"/>
</dbReference>
<dbReference type="HOGENOM" id="CLU_007220_2_2_9"/>
<dbReference type="OrthoDB" id="9775440at2"/>
<dbReference type="Proteomes" id="UP000000719">
    <property type="component" value="Chromosome"/>
</dbReference>
<dbReference type="GO" id="GO:0005829">
    <property type="term" value="C:cytosol"/>
    <property type="evidence" value="ECO:0007669"/>
    <property type="project" value="TreeGrafter"/>
</dbReference>
<dbReference type="GO" id="GO:0004814">
    <property type="term" value="F:arginine-tRNA ligase activity"/>
    <property type="evidence" value="ECO:0007669"/>
    <property type="project" value="InterPro"/>
</dbReference>
<dbReference type="GO" id="GO:0005524">
    <property type="term" value="F:ATP binding"/>
    <property type="evidence" value="ECO:0007669"/>
    <property type="project" value="UniProtKB-UniRule"/>
</dbReference>
<dbReference type="GO" id="GO:0004820">
    <property type="term" value="F:glycine-tRNA ligase activity"/>
    <property type="evidence" value="ECO:0007669"/>
    <property type="project" value="UniProtKB-UniRule"/>
</dbReference>
<dbReference type="GO" id="GO:0006420">
    <property type="term" value="P:arginyl-tRNA aminoacylation"/>
    <property type="evidence" value="ECO:0007669"/>
    <property type="project" value="InterPro"/>
</dbReference>
<dbReference type="GO" id="GO:0006426">
    <property type="term" value="P:glycyl-tRNA aminoacylation"/>
    <property type="evidence" value="ECO:0007669"/>
    <property type="project" value="UniProtKB-UniRule"/>
</dbReference>
<dbReference type="HAMAP" id="MF_00255">
    <property type="entry name" value="Gly_tRNA_synth_beta"/>
    <property type="match status" value="1"/>
</dbReference>
<dbReference type="InterPro" id="IPR008909">
    <property type="entry name" value="DALR_anticod-bd"/>
</dbReference>
<dbReference type="InterPro" id="IPR015944">
    <property type="entry name" value="Gly-tRNA-synth_bsu"/>
</dbReference>
<dbReference type="InterPro" id="IPR006194">
    <property type="entry name" value="Gly-tRNA-synth_heterodimer"/>
</dbReference>
<dbReference type="NCBIfam" id="TIGR00211">
    <property type="entry name" value="glyS"/>
    <property type="match status" value="1"/>
</dbReference>
<dbReference type="PANTHER" id="PTHR30075:SF2">
    <property type="entry name" value="GLYCINE--TRNA LIGASE, CHLOROPLASTIC_MITOCHONDRIAL 2"/>
    <property type="match status" value="1"/>
</dbReference>
<dbReference type="PANTHER" id="PTHR30075">
    <property type="entry name" value="GLYCYL-TRNA SYNTHETASE"/>
    <property type="match status" value="1"/>
</dbReference>
<dbReference type="Pfam" id="PF05746">
    <property type="entry name" value="DALR_1"/>
    <property type="match status" value="1"/>
</dbReference>
<dbReference type="Pfam" id="PF02092">
    <property type="entry name" value="tRNA_synt_2f"/>
    <property type="match status" value="1"/>
</dbReference>
<dbReference type="PRINTS" id="PR01045">
    <property type="entry name" value="TRNASYNTHGB"/>
</dbReference>
<dbReference type="SUPFAM" id="SSF109604">
    <property type="entry name" value="HD-domain/PDEase-like"/>
    <property type="match status" value="1"/>
</dbReference>
<dbReference type="PROSITE" id="PS50861">
    <property type="entry name" value="AA_TRNA_LIGASE_II_GLYAB"/>
    <property type="match status" value="1"/>
</dbReference>
<feature type="chain" id="PRO_1000197203" description="Glycine--tRNA ligase beta subunit">
    <location>
        <begin position="1"/>
        <end position="686"/>
    </location>
</feature>
<sequence length="686" mass="78940">MARDLLFEIGTEEMPAGLIGKIRSDLKDLAINTLEDKRLDFKECKVFSTPRRLVLFVKELAEKQEEKREVVKGPARSIAFEDDGTPTRAAKGFSRAQGVEVDDLIIKDDYVYVEKIEQGQDTAGLLKDILPGLINKLPLPRSMRWADYNFKFIRPIRWLLALFGEEIISFSMAGVQSGAYTRGHRFLVKDRLEVKDPDHYFDVMEKGYIIVDHNKRRELILKQIREIEKEIGKVMVEDDLLTEVVDLVEYPTAFYGKFDRSYLELPDDVLITSMAEHQRYFPVIDEDGSLSPYFVGVRDGIEDYIEEVRYGNEMVLRARLADARFFFEEDLKVSIEERQKELEEIVFQEDLGSMMDKVKRLKQLVIQIGKSLNLKESQLQSLIRAAELSKNDLVTEMVNEFTKLQGVMGREYALINGEDEEVATAIYEQYLPRYSGDRLPQTLYGRILSIADKIDNITSHFSLGMIPSGSQDPFALRRQANGIVNIIIDAQLPLKLSSLLNWSIEVLEPGDKDFVNEEKSFLLQRLETILDERGIRYDIINSVVRVGDDDPNNILSRAEAVMSLRKENPDLFVDLIQGLVRARNLASKGEGNNDINPEYFECREEKELYDIYRKIKDEIQRQFKKKNYLSGLKKLVDVKEPVDNFLDNVVVMVEDERIKNNRLALLQEISNLVSGVMNISEIALDD</sequence>
<comment type="catalytic activity">
    <reaction evidence="1">
        <text>tRNA(Gly) + glycine + ATP = glycyl-tRNA(Gly) + AMP + diphosphate</text>
        <dbReference type="Rhea" id="RHEA:16013"/>
        <dbReference type="Rhea" id="RHEA-COMP:9664"/>
        <dbReference type="Rhea" id="RHEA-COMP:9683"/>
        <dbReference type="ChEBI" id="CHEBI:30616"/>
        <dbReference type="ChEBI" id="CHEBI:33019"/>
        <dbReference type="ChEBI" id="CHEBI:57305"/>
        <dbReference type="ChEBI" id="CHEBI:78442"/>
        <dbReference type="ChEBI" id="CHEBI:78522"/>
        <dbReference type="ChEBI" id="CHEBI:456215"/>
        <dbReference type="EC" id="6.1.1.14"/>
    </reaction>
</comment>
<comment type="subunit">
    <text evidence="1">Tetramer of two alpha and two beta subunits.</text>
</comment>
<comment type="subcellular location">
    <subcellularLocation>
        <location evidence="1">Cytoplasm</location>
    </subcellularLocation>
</comment>
<comment type="similarity">
    <text evidence="1">Belongs to the class-II aminoacyl-tRNA synthetase family.</text>
</comment>